<dbReference type="EC" id="6.1.1.7" evidence="1"/>
<dbReference type="EMBL" id="CP000727">
    <property type="protein sequence ID" value="ABS39269.1"/>
    <property type="molecule type" value="Genomic_DNA"/>
</dbReference>
<dbReference type="EMBL" id="AM412317">
    <property type="protein sequence ID" value="CAL84122.1"/>
    <property type="molecule type" value="Genomic_DNA"/>
</dbReference>
<dbReference type="RefSeq" id="WP_011986885.1">
    <property type="nucleotide sequence ID" value="NC_009698.1"/>
</dbReference>
<dbReference type="RefSeq" id="YP_001255060.1">
    <property type="nucleotide sequence ID" value="NC_009495.1"/>
</dbReference>
<dbReference type="RefSeq" id="YP_001388276.1">
    <property type="nucleotide sequence ID" value="NC_009698.1"/>
</dbReference>
<dbReference type="SMR" id="A5I4Z5"/>
<dbReference type="GeneID" id="5186819"/>
<dbReference type="KEGG" id="cbh:CLC_2435"/>
<dbReference type="KEGG" id="cbo:CBO2564"/>
<dbReference type="PATRIC" id="fig|413999.7.peg.2543"/>
<dbReference type="HOGENOM" id="CLU_004485_1_1_9"/>
<dbReference type="PRO" id="PR:A5I4Z5"/>
<dbReference type="Proteomes" id="UP000001986">
    <property type="component" value="Chromosome"/>
</dbReference>
<dbReference type="GO" id="GO:0005829">
    <property type="term" value="C:cytosol"/>
    <property type="evidence" value="ECO:0000318"/>
    <property type="project" value="GO_Central"/>
</dbReference>
<dbReference type="GO" id="GO:0004813">
    <property type="term" value="F:alanine-tRNA ligase activity"/>
    <property type="evidence" value="ECO:0000318"/>
    <property type="project" value="GO_Central"/>
</dbReference>
<dbReference type="GO" id="GO:0002161">
    <property type="term" value="F:aminoacyl-tRNA deacylase activity"/>
    <property type="evidence" value="ECO:0000318"/>
    <property type="project" value="GO_Central"/>
</dbReference>
<dbReference type="GO" id="GO:0005524">
    <property type="term" value="F:ATP binding"/>
    <property type="evidence" value="ECO:0007669"/>
    <property type="project" value="UniProtKB-UniRule"/>
</dbReference>
<dbReference type="GO" id="GO:0140096">
    <property type="term" value="F:catalytic activity, acting on a protein"/>
    <property type="evidence" value="ECO:0007669"/>
    <property type="project" value="UniProtKB-ARBA"/>
</dbReference>
<dbReference type="GO" id="GO:0016740">
    <property type="term" value="F:transferase activity"/>
    <property type="evidence" value="ECO:0007669"/>
    <property type="project" value="UniProtKB-ARBA"/>
</dbReference>
<dbReference type="GO" id="GO:0000049">
    <property type="term" value="F:tRNA binding"/>
    <property type="evidence" value="ECO:0007669"/>
    <property type="project" value="UniProtKB-KW"/>
</dbReference>
<dbReference type="GO" id="GO:0008270">
    <property type="term" value="F:zinc ion binding"/>
    <property type="evidence" value="ECO:0007669"/>
    <property type="project" value="UniProtKB-UniRule"/>
</dbReference>
<dbReference type="GO" id="GO:0006419">
    <property type="term" value="P:alanyl-tRNA aminoacylation"/>
    <property type="evidence" value="ECO:0000318"/>
    <property type="project" value="GO_Central"/>
</dbReference>
<dbReference type="CDD" id="cd00673">
    <property type="entry name" value="AlaRS_core"/>
    <property type="match status" value="1"/>
</dbReference>
<dbReference type="FunFam" id="2.40.30.130:FF:000001">
    <property type="entry name" value="Alanine--tRNA ligase"/>
    <property type="match status" value="1"/>
</dbReference>
<dbReference type="FunFam" id="3.10.310.40:FF:000001">
    <property type="entry name" value="Alanine--tRNA ligase"/>
    <property type="match status" value="1"/>
</dbReference>
<dbReference type="FunFam" id="3.30.54.20:FF:000001">
    <property type="entry name" value="Alanine--tRNA ligase"/>
    <property type="match status" value="1"/>
</dbReference>
<dbReference type="FunFam" id="3.30.930.10:FF:000170">
    <property type="entry name" value="Alanine--tRNA ligase"/>
    <property type="match status" value="1"/>
</dbReference>
<dbReference type="FunFam" id="3.30.980.10:FF:000004">
    <property type="entry name" value="Alanine--tRNA ligase, cytoplasmic"/>
    <property type="match status" value="1"/>
</dbReference>
<dbReference type="Gene3D" id="2.40.30.130">
    <property type="match status" value="1"/>
</dbReference>
<dbReference type="Gene3D" id="3.10.310.40">
    <property type="match status" value="1"/>
</dbReference>
<dbReference type="Gene3D" id="3.30.54.20">
    <property type="match status" value="1"/>
</dbReference>
<dbReference type="Gene3D" id="6.10.250.550">
    <property type="match status" value="1"/>
</dbReference>
<dbReference type="Gene3D" id="3.30.930.10">
    <property type="entry name" value="Bira Bifunctional Protein, Domain 2"/>
    <property type="match status" value="1"/>
</dbReference>
<dbReference type="Gene3D" id="3.30.980.10">
    <property type="entry name" value="Threonyl-trna Synthetase, Chain A, domain 2"/>
    <property type="match status" value="1"/>
</dbReference>
<dbReference type="HAMAP" id="MF_00036_B">
    <property type="entry name" value="Ala_tRNA_synth_B"/>
    <property type="match status" value="1"/>
</dbReference>
<dbReference type="InterPro" id="IPR045864">
    <property type="entry name" value="aa-tRNA-synth_II/BPL/LPL"/>
</dbReference>
<dbReference type="InterPro" id="IPR002318">
    <property type="entry name" value="Ala-tRNA-lgiase_IIc"/>
</dbReference>
<dbReference type="InterPro" id="IPR018162">
    <property type="entry name" value="Ala-tRNA-ligase_IIc_anticod-bd"/>
</dbReference>
<dbReference type="InterPro" id="IPR018165">
    <property type="entry name" value="Ala-tRNA-synth_IIc_core"/>
</dbReference>
<dbReference type="InterPro" id="IPR018164">
    <property type="entry name" value="Ala-tRNA-synth_IIc_N"/>
</dbReference>
<dbReference type="InterPro" id="IPR050058">
    <property type="entry name" value="Ala-tRNA_ligase"/>
</dbReference>
<dbReference type="InterPro" id="IPR023033">
    <property type="entry name" value="Ala_tRNA_ligase_euk/bac"/>
</dbReference>
<dbReference type="InterPro" id="IPR003156">
    <property type="entry name" value="DHHA1_dom"/>
</dbReference>
<dbReference type="InterPro" id="IPR018163">
    <property type="entry name" value="Thr/Ala-tRNA-synth_IIc_edit"/>
</dbReference>
<dbReference type="InterPro" id="IPR009000">
    <property type="entry name" value="Transl_B-barrel_sf"/>
</dbReference>
<dbReference type="InterPro" id="IPR012947">
    <property type="entry name" value="tRNA_SAD"/>
</dbReference>
<dbReference type="NCBIfam" id="TIGR00344">
    <property type="entry name" value="alaS"/>
    <property type="match status" value="1"/>
</dbReference>
<dbReference type="PANTHER" id="PTHR11777:SF9">
    <property type="entry name" value="ALANINE--TRNA LIGASE, CYTOPLASMIC"/>
    <property type="match status" value="1"/>
</dbReference>
<dbReference type="PANTHER" id="PTHR11777">
    <property type="entry name" value="ALANYL-TRNA SYNTHETASE"/>
    <property type="match status" value="1"/>
</dbReference>
<dbReference type="Pfam" id="PF02272">
    <property type="entry name" value="DHHA1"/>
    <property type="match status" value="1"/>
</dbReference>
<dbReference type="Pfam" id="PF01411">
    <property type="entry name" value="tRNA-synt_2c"/>
    <property type="match status" value="1"/>
</dbReference>
<dbReference type="Pfam" id="PF07973">
    <property type="entry name" value="tRNA_SAD"/>
    <property type="match status" value="1"/>
</dbReference>
<dbReference type="PRINTS" id="PR00980">
    <property type="entry name" value="TRNASYNTHALA"/>
</dbReference>
<dbReference type="SMART" id="SM00863">
    <property type="entry name" value="tRNA_SAD"/>
    <property type="match status" value="1"/>
</dbReference>
<dbReference type="SUPFAM" id="SSF55681">
    <property type="entry name" value="Class II aaRS and biotin synthetases"/>
    <property type="match status" value="1"/>
</dbReference>
<dbReference type="SUPFAM" id="SSF101353">
    <property type="entry name" value="Putative anticodon-binding domain of alanyl-tRNA synthetase (AlaRS)"/>
    <property type="match status" value="1"/>
</dbReference>
<dbReference type="SUPFAM" id="SSF55186">
    <property type="entry name" value="ThrRS/AlaRS common domain"/>
    <property type="match status" value="1"/>
</dbReference>
<dbReference type="SUPFAM" id="SSF50447">
    <property type="entry name" value="Translation proteins"/>
    <property type="match status" value="1"/>
</dbReference>
<dbReference type="PROSITE" id="PS50860">
    <property type="entry name" value="AA_TRNA_LIGASE_II_ALA"/>
    <property type="match status" value="1"/>
</dbReference>
<feature type="chain" id="PRO_0000347562" description="Alanine--tRNA ligase">
    <location>
        <begin position="1"/>
        <end position="879"/>
    </location>
</feature>
<feature type="binding site" evidence="1">
    <location>
        <position position="566"/>
    </location>
    <ligand>
        <name>Zn(2+)</name>
        <dbReference type="ChEBI" id="CHEBI:29105"/>
    </ligand>
</feature>
<feature type="binding site" evidence="1">
    <location>
        <position position="570"/>
    </location>
    <ligand>
        <name>Zn(2+)</name>
        <dbReference type="ChEBI" id="CHEBI:29105"/>
    </ligand>
</feature>
<feature type="binding site" evidence="1">
    <location>
        <position position="668"/>
    </location>
    <ligand>
        <name>Zn(2+)</name>
        <dbReference type="ChEBI" id="CHEBI:29105"/>
    </ligand>
</feature>
<feature type="binding site" evidence="1">
    <location>
        <position position="672"/>
    </location>
    <ligand>
        <name>Zn(2+)</name>
        <dbReference type="ChEBI" id="CHEBI:29105"/>
    </ligand>
</feature>
<protein>
    <recommendedName>
        <fullName evidence="1">Alanine--tRNA ligase</fullName>
        <ecNumber evidence="1">6.1.1.7</ecNumber>
    </recommendedName>
    <alternativeName>
        <fullName evidence="1">Alanyl-tRNA synthetase</fullName>
        <shortName evidence="1">AlaRS</shortName>
    </alternativeName>
</protein>
<organism>
    <name type="scientific">Clostridium botulinum (strain Hall / ATCC 3502 / NCTC 13319 / Type A)</name>
    <dbReference type="NCBI Taxonomy" id="441771"/>
    <lineage>
        <taxon>Bacteria</taxon>
        <taxon>Bacillati</taxon>
        <taxon>Bacillota</taxon>
        <taxon>Clostridia</taxon>
        <taxon>Eubacteriales</taxon>
        <taxon>Clostridiaceae</taxon>
        <taxon>Clostridium</taxon>
    </lineage>
</organism>
<keyword id="KW-0030">Aminoacyl-tRNA synthetase</keyword>
<keyword id="KW-0067">ATP-binding</keyword>
<keyword id="KW-0963">Cytoplasm</keyword>
<keyword id="KW-0436">Ligase</keyword>
<keyword id="KW-0479">Metal-binding</keyword>
<keyword id="KW-0547">Nucleotide-binding</keyword>
<keyword id="KW-0648">Protein biosynthesis</keyword>
<keyword id="KW-1185">Reference proteome</keyword>
<keyword id="KW-0694">RNA-binding</keyword>
<keyword id="KW-0820">tRNA-binding</keyword>
<keyword id="KW-0862">Zinc</keyword>
<reference key="1">
    <citation type="journal article" date="2007" name="Genome Res.">
        <title>Genome sequence of a proteolytic (Group I) Clostridium botulinum strain Hall A and comparative analysis of the clostridial genomes.</title>
        <authorList>
            <person name="Sebaihia M."/>
            <person name="Peck M.W."/>
            <person name="Minton N.P."/>
            <person name="Thomson N.R."/>
            <person name="Holden M.T.G."/>
            <person name="Mitchell W.J."/>
            <person name="Carter A.T."/>
            <person name="Bentley S.D."/>
            <person name="Mason D.R."/>
            <person name="Crossman L."/>
            <person name="Paul C.J."/>
            <person name="Ivens A."/>
            <person name="Wells-Bennik M.H.J."/>
            <person name="Davis I.J."/>
            <person name="Cerdeno-Tarraga A.M."/>
            <person name="Churcher C."/>
            <person name="Quail M.A."/>
            <person name="Chillingworth T."/>
            <person name="Feltwell T."/>
            <person name="Fraser A."/>
            <person name="Goodhead I."/>
            <person name="Hance Z."/>
            <person name="Jagels K."/>
            <person name="Larke N."/>
            <person name="Maddison M."/>
            <person name="Moule S."/>
            <person name="Mungall K."/>
            <person name="Norbertczak H."/>
            <person name="Rabbinowitsch E."/>
            <person name="Sanders M."/>
            <person name="Simmonds M."/>
            <person name="White B."/>
            <person name="Whithead S."/>
            <person name="Parkhill J."/>
        </authorList>
    </citation>
    <scope>NUCLEOTIDE SEQUENCE [LARGE SCALE GENOMIC DNA]</scope>
    <source>
        <strain>Hall / ATCC 3502 / NCTC 13319 / Type A</strain>
    </source>
</reference>
<reference key="2">
    <citation type="journal article" date="2007" name="PLoS ONE">
        <title>Analysis of the neurotoxin complex genes in Clostridium botulinum A1-A4 and B1 strains: BoNT/A3, /Ba4 and /B1 clusters are located within plasmids.</title>
        <authorList>
            <person name="Smith T.J."/>
            <person name="Hill K.K."/>
            <person name="Foley B.T."/>
            <person name="Detter J.C."/>
            <person name="Munk A.C."/>
            <person name="Bruce D.C."/>
            <person name="Doggett N.A."/>
            <person name="Smith L.A."/>
            <person name="Marks J.D."/>
            <person name="Xie G."/>
            <person name="Brettin T.S."/>
        </authorList>
    </citation>
    <scope>NUCLEOTIDE SEQUENCE [LARGE SCALE GENOMIC DNA]</scope>
    <source>
        <strain>Hall / ATCC 3502 / NCTC 13319 / Type A</strain>
    </source>
</reference>
<accession>A5I4Z5</accession>
<accession>A7G661</accession>
<sequence length="879" mass="99314">MERMGLNEIREEYLKFFESKAHLRLPSFSLVPKNDKSLLLINAGMAPLKPYFTGLQVPPNKRVTTCQKCVRTGDIENVGKTSRHGTFFEMMGNFSFGDYFKEEVIPWAWEFTTEVLKLPKNKLYVTIYEDDDEALDIWVNKTDMDPKRIFRLGKEDNFWEHGLGPCGPCSEIHFDRGAGEVKTSEEFVKASDEDKIVEFWNLVFTQFDKDEEGNYNKLANPNIDTGMGLERMATIMQNVDTIFEVDTIKAVLDKVCKLSGANYKEDRVKDISIRIITDHIRSITFMISDGILPSNEGRGYVLRRLLRRAARHGKTLGINNTFLHNLTDIVIENCYKNYPELEEKREYIKKIIKLEEERFDETIDAGMQILNDYIKEVKNNNYKILSGDKAFKLYDTYGFPVELTEEILEEEGISIDKEGFNKEMKEQRERARSAREETNYMGAEDTILNKIDLNINTDFEGYDKLEVKSKVAVIIKDEEFKNEMEKGNEGVIVTYNTPFYAEMGGQIGDTGIIYNDNFKAEVIDCKKNISGKILHFVKILDGKVALEDQVILKVNEERRNNIRKNHTATHILHAALIKVVGDHVQQSGSYVDDERLRFDFSHFEAVSEDELKEVEKIVNKEIMKANAVNTKVMNIEEAKQQGAIALFDNKYKDDVRVVSVGDFSKELCGGTHVSNSGQIGIFKIVSEAGVAAGIRRIEAVTAFKAMEYVDHKNNILKEAAQILKCNEKELLNKLNHQVLEMKEKEKEIEALKLKLASGAEDEILDNIKEIKGVKVASAAVKDIDGNALRDLGDKIRDNMQSGVVVLGSNYKGKVLFVAMATKDTVAKGVHCGKIIKEVATIAGGGGGGRPDMAQAGGKDPNKLEDAIKTVETVVESLVK</sequence>
<name>SYA_CLOBH</name>
<proteinExistence type="inferred from homology"/>
<comment type="function">
    <text evidence="1">Catalyzes the attachment of alanine to tRNA(Ala) in a two-step reaction: alanine is first activated by ATP to form Ala-AMP and then transferred to the acceptor end of tRNA(Ala). Also edits incorrectly charged Ser-tRNA(Ala) and Gly-tRNA(Ala) via its editing domain.</text>
</comment>
<comment type="catalytic activity">
    <reaction evidence="1">
        <text>tRNA(Ala) + L-alanine + ATP = L-alanyl-tRNA(Ala) + AMP + diphosphate</text>
        <dbReference type="Rhea" id="RHEA:12540"/>
        <dbReference type="Rhea" id="RHEA-COMP:9657"/>
        <dbReference type="Rhea" id="RHEA-COMP:9923"/>
        <dbReference type="ChEBI" id="CHEBI:30616"/>
        <dbReference type="ChEBI" id="CHEBI:33019"/>
        <dbReference type="ChEBI" id="CHEBI:57972"/>
        <dbReference type="ChEBI" id="CHEBI:78442"/>
        <dbReference type="ChEBI" id="CHEBI:78497"/>
        <dbReference type="ChEBI" id="CHEBI:456215"/>
        <dbReference type="EC" id="6.1.1.7"/>
    </reaction>
</comment>
<comment type="cofactor">
    <cofactor evidence="1">
        <name>Zn(2+)</name>
        <dbReference type="ChEBI" id="CHEBI:29105"/>
    </cofactor>
    <text evidence="1">Binds 1 zinc ion per subunit.</text>
</comment>
<comment type="subcellular location">
    <subcellularLocation>
        <location evidence="1">Cytoplasm</location>
    </subcellularLocation>
</comment>
<comment type="domain">
    <text evidence="1">Consists of three domains; the N-terminal catalytic domain, the editing domain and the C-terminal C-Ala domain. The editing domain removes incorrectly charged amino acids, while the C-Ala domain, along with tRNA(Ala), serves as a bridge to cooperatively bring together the editing and aminoacylation centers thus stimulating deacylation of misacylated tRNAs.</text>
</comment>
<comment type="similarity">
    <text evidence="1">Belongs to the class-II aminoacyl-tRNA synthetase family.</text>
</comment>
<evidence type="ECO:0000255" key="1">
    <source>
        <dbReference type="HAMAP-Rule" id="MF_00036"/>
    </source>
</evidence>
<gene>
    <name evidence="1" type="primary">alaS</name>
    <name type="ordered locus">CBO2564</name>
    <name type="ordered locus">CLC_2435</name>
</gene>